<feature type="chain" id="PRO_0000238636" description="Uncharacterized protein YPL038W-A">
    <location>
        <begin position="1"/>
        <end position="63"/>
    </location>
</feature>
<proteinExistence type="predicted"/>
<reference key="1">
    <citation type="journal article" date="1997" name="Nature">
        <title>The nucleotide sequence of Saccharomyces cerevisiae chromosome XVI.</title>
        <authorList>
            <person name="Bussey H."/>
            <person name="Storms R.K."/>
            <person name="Ahmed A."/>
            <person name="Albermann K."/>
            <person name="Allen E."/>
            <person name="Ansorge W."/>
            <person name="Araujo R."/>
            <person name="Aparicio A."/>
            <person name="Barrell B.G."/>
            <person name="Badcock K."/>
            <person name="Benes V."/>
            <person name="Botstein D."/>
            <person name="Bowman S."/>
            <person name="Brueckner M."/>
            <person name="Carpenter J."/>
            <person name="Cherry J.M."/>
            <person name="Chung E."/>
            <person name="Churcher C.M."/>
            <person name="Coster F."/>
            <person name="Davis K."/>
            <person name="Davis R.W."/>
            <person name="Dietrich F.S."/>
            <person name="Delius H."/>
            <person name="DiPaolo T."/>
            <person name="Dubois E."/>
            <person name="Duesterhoeft A."/>
            <person name="Duncan M."/>
            <person name="Floeth M."/>
            <person name="Fortin N."/>
            <person name="Friesen J.D."/>
            <person name="Fritz C."/>
            <person name="Goffeau A."/>
            <person name="Hall J."/>
            <person name="Hebling U."/>
            <person name="Heumann K."/>
            <person name="Hilbert H."/>
            <person name="Hillier L.W."/>
            <person name="Hunicke-Smith S."/>
            <person name="Hyman R.W."/>
            <person name="Johnston M."/>
            <person name="Kalman S."/>
            <person name="Kleine K."/>
            <person name="Komp C."/>
            <person name="Kurdi O."/>
            <person name="Lashkari D."/>
            <person name="Lew H."/>
            <person name="Lin A."/>
            <person name="Lin D."/>
            <person name="Louis E.J."/>
            <person name="Marathe R."/>
            <person name="Messenguy F."/>
            <person name="Mewes H.-W."/>
            <person name="Mirtipati S."/>
            <person name="Moestl D."/>
            <person name="Mueller-Auer S."/>
            <person name="Namath A."/>
            <person name="Nentwich U."/>
            <person name="Oefner P."/>
            <person name="Pearson D."/>
            <person name="Petel F.X."/>
            <person name="Pohl T.M."/>
            <person name="Purnelle B."/>
            <person name="Rajandream M.A."/>
            <person name="Rechmann S."/>
            <person name="Rieger M."/>
            <person name="Riles L."/>
            <person name="Roberts D."/>
            <person name="Schaefer M."/>
            <person name="Scharfe M."/>
            <person name="Scherens B."/>
            <person name="Schramm S."/>
            <person name="Schroeder M."/>
            <person name="Sdicu A.-M."/>
            <person name="Tettelin H."/>
            <person name="Urrestarazu L.A."/>
            <person name="Ushinsky S."/>
            <person name="Vierendeels F."/>
            <person name="Vissers S."/>
            <person name="Voss H."/>
            <person name="Walsh S.V."/>
            <person name="Wambutt R."/>
            <person name="Wang Y."/>
            <person name="Wedler E."/>
            <person name="Wedler H."/>
            <person name="Winnett E."/>
            <person name="Zhong W.-W."/>
            <person name="Zollner A."/>
            <person name="Vo D.H."/>
            <person name="Hani J."/>
        </authorList>
    </citation>
    <scope>NUCLEOTIDE SEQUENCE [LARGE SCALE GENOMIC DNA]</scope>
    <source>
        <strain>ATCC 204508 / S288c</strain>
    </source>
</reference>
<reference key="2">
    <citation type="journal article" date="2014" name="G3 (Bethesda)">
        <title>The reference genome sequence of Saccharomyces cerevisiae: Then and now.</title>
        <authorList>
            <person name="Engel S.R."/>
            <person name="Dietrich F.S."/>
            <person name="Fisk D.G."/>
            <person name="Binkley G."/>
            <person name="Balakrishnan R."/>
            <person name="Costanzo M.C."/>
            <person name="Dwight S.S."/>
            <person name="Hitz B.C."/>
            <person name="Karra K."/>
            <person name="Nash R.S."/>
            <person name="Weng S."/>
            <person name="Wong E.D."/>
            <person name="Lloyd P."/>
            <person name="Skrzypek M.S."/>
            <person name="Miyasato S.R."/>
            <person name="Simison M."/>
            <person name="Cherry J.M."/>
        </authorList>
    </citation>
    <scope>GENOME REANNOTATION</scope>
    <source>
        <strain>ATCC 204508 / S288c</strain>
    </source>
</reference>
<reference key="3">
    <citation type="journal article" date="2003" name="Genome Res.">
        <title>Systematic discovery of new genes in the Saccharomyces cerevisiae genome.</title>
        <authorList>
            <person name="Kessler M.M."/>
            <person name="Zeng Q."/>
            <person name="Hogan S."/>
            <person name="Cook R."/>
            <person name="Morales A.J."/>
            <person name="Cottarel G."/>
        </authorList>
    </citation>
    <scope>IDENTIFICATION</scope>
</reference>
<sequence>MVCRFVHHSRVIFISIYDFLSTKGKKNMYNYTQEKKTKQKNTFTQASIYYENFFESYRTISCL</sequence>
<dbReference type="EMBL" id="U44030">
    <property type="status" value="NOT_ANNOTATED_CDS"/>
    <property type="molecule type" value="Genomic_DNA"/>
</dbReference>
<dbReference type="EMBL" id="BK006949">
    <property type="protein sequence ID" value="DAA11391.1"/>
    <property type="molecule type" value="Genomic_DNA"/>
</dbReference>
<dbReference type="RefSeq" id="NP_878182.1">
    <property type="nucleotide sequence ID" value="NM_001184580.1"/>
</dbReference>
<dbReference type="BioGRID" id="37063">
    <property type="interactions" value="30"/>
</dbReference>
<dbReference type="FunCoup" id="Q3E7B4">
    <property type="interactions" value="3"/>
</dbReference>
<dbReference type="PaxDb" id="4932-YPL038W-A"/>
<dbReference type="EnsemblFungi" id="YPL038W-A_mRNA">
    <property type="protein sequence ID" value="YPL038W-A"/>
    <property type="gene ID" value="YPL038W-A"/>
</dbReference>
<dbReference type="GeneID" id="1466521"/>
<dbReference type="KEGG" id="sce:YPL038W-A"/>
<dbReference type="AGR" id="SGD:S000028588"/>
<dbReference type="SGD" id="S000028588">
    <property type="gene designation" value="YPL038W-A"/>
</dbReference>
<dbReference type="VEuPathDB" id="FungiDB:YPL038W-A"/>
<dbReference type="HOGENOM" id="CLU_2887546_0_0_1"/>
<dbReference type="InParanoid" id="Q3E7B4"/>
<dbReference type="OrthoDB" id="10282228at2759"/>
<dbReference type="BioCyc" id="YEAST:G3O-34364-MONOMER"/>
<dbReference type="PRO" id="PR:Q3E7B4"/>
<dbReference type="Proteomes" id="UP000002311">
    <property type="component" value="Chromosome XVI"/>
</dbReference>
<dbReference type="RNAct" id="Q3E7B4">
    <property type="molecule type" value="protein"/>
</dbReference>
<accession>Q3E7B4</accession>
<accession>D6W3X5</accession>
<organism>
    <name type="scientific">Saccharomyces cerevisiae (strain ATCC 204508 / S288c)</name>
    <name type="common">Baker's yeast</name>
    <dbReference type="NCBI Taxonomy" id="559292"/>
    <lineage>
        <taxon>Eukaryota</taxon>
        <taxon>Fungi</taxon>
        <taxon>Dikarya</taxon>
        <taxon>Ascomycota</taxon>
        <taxon>Saccharomycotina</taxon>
        <taxon>Saccharomycetes</taxon>
        <taxon>Saccharomycetales</taxon>
        <taxon>Saccharomycetaceae</taxon>
        <taxon>Saccharomyces</taxon>
    </lineage>
</organism>
<name>YP038_YEAST</name>
<protein>
    <recommendedName>
        <fullName>Uncharacterized protein YPL038W-A</fullName>
    </recommendedName>
</protein>
<keyword id="KW-1185">Reference proteome</keyword>
<gene>
    <name type="ordered locus">YPL038W-A</name>
</gene>